<name>POC1A_MOUSE</name>
<comment type="function">
    <text evidence="1">Plays an important role in centriole assembly and/or stability and ciliogenesis. Involved in early steps of centriole duplication, as well as in the later steps of centriole length control. Acts in concert with POC1B to ensure centriole integrity and proper mitotic spindle formation (By similarity).</text>
</comment>
<comment type="subunit">
    <text evidence="1">Interacts with POC1B.</text>
</comment>
<comment type="subcellular location">
    <subcellularLocation>
        <location evidence="1">Cytoplasm</location>
        <location evidence="1">Cytoskeleton</location>
        <location evidence="1">Microtubule organizing center</location>
        <location evidence="1">Centrosome</location>
        <location evidence="1">Centriole</location>
    </subcellularLocation>
    <subcellularLocation>
        <location evidence="1">Cytoplasm</location>
        <location evidence="1">Cytoskeleton</location>
        <location evidence="1">Cilium basal body</location>
    </subcellularLocation>
    <subcellularLocation>
        <location evidence="1">Cytoplasm</location>
        <location evidence="1">Cytoskeleton</location>
        <location evidence="1">Spindle pole</location>
    </subcellularLocation>
    <text evidence="1">Component of both mother and daughter centrioles.</text>
</comment>
<comment type="alternative products">
    <event type="alternative splicing"/>
    <isoform>
        <id>Q8JZX3-1</id>
        <name>1</name>
        <sequence type="displayed"/>
    </isoform>
    <isoform>
        <id>Q8JZX3-2</id>
        <name>2</name>
        <sequence type="described" ref="VSP_017841"/>
    </isoform>
    <isoform>
        <id>Q8JZX3-3</id>
        <name>3</name>
        <sequence type="described" ref="VSP_017840 VSP_017841"/>
    </isoform>
</comment>
<comment type="tissue specificity">
    <text evidence="4">Widely expressed in embryonic and adult tissues.</text>
</comment>
<comment type="similarity">
    <text evidence="6">Belongs to the WD repeat POC1 family.</text>
</comment>
<sequence length="405" mass="45125">MAAPSQEDPSLERHFKGHRDAVTCVDFSLNTKHLASGSMDSTLMIWHMKPQSRAYRFTGHKDAVTCVNFSPSGHLLASGSRDKTVRIWVPNVKGESTVFRAHTATVRSVHFCSDGQSLVTASDDKTVKVWSTHRQRFLFSLTQHINWVRCAKFSPDGRLIVSASDDKTVKLWDKTSRECIHSYCEHGGFVTYVDFHPSGTCIAAAGMDNTVKVWDARTHRLLQHYQLHSAAVNALSFHPSGNYLITASSDSTLKILDLMEGRLLYTLHGHQGPATTVAFSRTGEYFASGGSDEQVMVWKSNFDIVDYGDMKARRPPPLTSSSGTLPKMDLPVPPGRDRSLESVQGEPQESISMPQTLTSTLEHIVGQLDILTQTVSILEQRLTLTEDRLKQCLENQQLIMQRTPP</sequence>
<reference key="1">
    <citation type="journal article" date="2005" name="Science">
        <title>The transcriptional landscape of the mammalian genome.</title>
        <authorList>
            <person name="Carninci P."/>
            <person name="Kasukawa T."/>
            <person name="Katayama S."/>
            <person name="Gough J."/>
            <person name="Frith M.C."/>
            <person name="Maeda N."/>
            <person name="Oyama R."/>
            <person name="Ravasi T."/>
            <person name="Lenhard B."/>
            <person name="Wells C."/>
            <person name="Kodzius R."/>
            <person name="Shimokawa K."/>
            <person name="Bajic V.B."/>
            <person name="Brenner S.E."/>
            <person name="Batalov S."/>
            <person name="Forrest A.R."/>
            <person name="Zavolan M."/>
            <person name="Davis M.J."/>
            <person name="Wilming L.G."/>
            <person name="Aidinis V."/>
            <person name="Allen J.E."/>
            <person name="Ambesi-Impiombato A."/>
            <person name="Apweiler R."/>
            <person name="Aturaliya R.N."/>
            <person name="Bailey T.L."/>
            <person name="Bansal M."/>
            <person name="Baxter L."/>
            <person name="Beisel K.W."/>
            <person name="Bersano T."/>
            <person name="Bono H."/>
            <person name="Chalk A.M."/>
            <person name="Chiu K.P."/>
            <person name="Choudhary V."/>
            <person name="Christoffels A."/>
            <person name="Clutterbuck D.R."/>
            <person name="Crowe M.L."/>
            <person name="Dalla E."/>
            <person name="Dalrymple B.P."/>
            <person name="de Bono B."/>
            <person name="Della Gatta G."/>
            <person name="di Bernardo D."/>
            <person name="Down T."/>
            <person name="Engstrom P."/>
            <person name="Fagiolini M."/>
            <person name="Faulkner G."/>
            <person name="Fletcher C.F."/>
            <person name="Fukushima T."/>
            <person name="Furuno M."/>
            <person name="Futaki S."/>
            <person name="Gariboldi M."/>
            <person name="Georgii-Hemming P."/>
            <person name="Gingeras T.R."/>
            <person name="Gojobori T."/>
            <person name="Green R.E."/>
            <person name="Gustincich S."/>
            <person name="Harbers M."/>
            <person name="Hayashi Y."/>
            <person name="Hensch T.K."/>
            <person name="Hirokawa N."/>
            <person name="Hill D."/>
            <person name="Huminiecki L."/>
            <person name="Iacono M."/>
            <person name="Ikeo K."/>
            <person name="Iwama A."/>
            <person name="Ishikawa T."/>
            <person name="Jakt M."/>
            <person name="Kanapin A."/>
            <person name="Katoh M."/>
            <person name="Kawasawa Y."/>
            <person name="Kelso J."/>
            <person name="Kitamura H."/>
            <person name="Kitano H."/>
            <person name="Kollias G."/>
            <person name="Krishnan S.P."/>
            <person name="Kruger A."/>
            <person name="Kummerfeld S.K."/>
            <person name="Kurochkin I.V."/>
            <person name="Lareau L.F."/>
            <person name="Lazarevic D."/>
            <person name="Lipovich L."/>
            <person name="Liu J."/>
            <person name="Liuni S."/>
            <person name="McWilliam S."/>
            <person name="Madan Babu M."/>
            <person name="Madera M."/>
            <person name="Marchionni L."/>
            <person name="Matsuda H."/>
            <person name="Matsuzawa S."/>
            <person name="Miki H."/>
            <person name="Mignone F."/>
            <person name="Miyake S."/>
            <person name="Morris K."/>
            <person name="Mottagui-Tabar S."/>
            <person name="Mulder N."/>
            <person name="Nakano N."/>
            <person name="Nakauchi H."/>
            <person name="Ng P."/>
            <person name="Nilsson R."/>
            <person name="Nishiguchi S."/>
            <person name="Nishikawa S."/>
            <person name="Nori F."/>
            <person name="Ohara O."/>
            <person name="Okazaki Y."/>
            <person name="Orlando V."/>
            <person name="Pang K.C."/>
            <person name="Pavan W.J."/>
            <person name="Pavesi G."/>
            <person name="Pesole G."/>
            <person name="Petrovsky N."/>
            <person name="Piazza S."/>
            <person name="Reed J."/>
            <person name="Reid J.F."/>
            <person name="Ring B.Z."/>
            <person name="Ringwald M."/>
            <person name="Rost B."/>
            <person name="Ruan Y."/>
            <person name="Salzberg S.L."/>
            <person name="Sandelin A."/>
            <person name="Schneider C."/>
            <person name="Schoenbach C."/>
            <person name="Sekiguchi K."/>
            <person name="Semple C.A."/>
            <person name="Seno S."/>
            <person name="Sessa L."/>
            <person name="Sheng Y."/>
            <person name="Shibata Y."/>
            <person name="Shimada H."/>
            <person name="Shimada K."/>
            <person name="Silva D."/>
            <person name="Sinclair B."/>
            <person name="Sperling S."/>
            <person name="Stupka E."/>
            <person name="Sugiura K."/>
            <person name="Sultana R."/>
            <person name="Takenaka Y."/>
            <person name="Taki K."/>
            <person name="Tammoja K."/>
            <person name="Tan S.L."/>
            <person name="Tang S."/>
            <person name="Taylor M.S."/>
            <person name="Tegner J."/>
            <person name="Teichmann S.A."/>
            <person name="Ueda H.R."/>
            <person name="van Nimwegen E."/>
            <person name="Verardo R."/>
            <person name="Wei C.L."/>
            <person name="Yagi K."/>
            <person name="Yamanishi H."/>
            <person name="Zabarovsky E."/>
            <person name="Zhu S."/>
            <person name="Zimmer A."/>
            <person name="Hide W."/>
            <person name="Bult C."/>
            <person name="Grimmond S.M."/>
            <person name="Teasdale R.D."/>
            <person name="Liu E.T."/>
            <person name="Brusic V."/>
            <person name="Quackenbush J."/>
            <person name="Wahlestedt C."/>
            <person name="Mattick J.S."/>
            <person name="Hume D.A."/>
            <person name="Kai C."/>
            <person name="Sasaki D."/>
            <person name="Tomaru Y."/>
            <person name="Fukuda S."/>
            <person name="Kanamori-Katayama M."/>
            <person name="Suzuki M."/>
            <person name="Aoki J."/>
            <person name="Arakawa T."/>
            <person name="Iida J."/>
            <person name="Imamura K."/>
            <person name="Itoh M."/>
            <person name="Kato T."/>
            <person name="Kawaji H."/>
            <person name="Kawagashira N."/>
            <person name="Kawashima T."/>
            <person name="Kojima M."/>
            <person name="Kondo S."/>
            <person name="Konno H."/>
            <person name="Nakano K."/>
            <person name="Ninomiya N."/>
            <person name="Nishio T."/>
            <person name="Okada M."/>
            <person name="Plessy C."/>
            <person name="Shibata K."/>
            <person name="Shiraki T."/>
            <person name="Suzuki S."/>
            <person name="Tagami M."/>
            <person name="Waki K."/>
            <person name="Watahiki A."/>
            <person name="Okamura-Oho Y."/>
            <person name="Suzuki H."/>
            <person name="Kawai J."/>
            <person name="Hayashizaki Y."/>
        </authorList>
    </citation>
    <scope>NUCLEOTIDE SEQUENCE [LARGE SCALE MRNA] (ISOFORMS 1 AND 3)</scope>
    <source>
        <strain>NOD</strain>
        <tissue>Corpus striatum</tissue>
        <tissue>Dendritic cell</tissue>
        <tissue>Liver</tissue>
    </source>
</reference>
<reference key="2">
    <citation type="journal article" date="2004" name="Genome Res.">
        <title>The status, quality, and expansion of the NIH full-length cDNA project: the Mammalian Gene Collection (MGC).</title>
        <authorList>
            <consortium name="The MGC Project Team"/>
        </authorList>
    </citation>
    <scope>NUCLEOTIDE SEQUENCE [LARGE SCALE MRNA] (ISOFORM 1)</scope>
    <source>
        <strain>Czech II</strain>
        <tissue>Lung</tissue>
    </source>
</reference>
<reference key="3">
    <citation type="journal article" date="2012" name="Am. J. Hum. Genet.">
        <title>POC1A truncation mutation causes a ciliopathy in humans characterized by primordial dwarfism.</title>
        <authorList>
            <person name="Shaheen R."/>
            <person name="Faqeih E."/>
            <person name="Shamseldin H.E."/>
            <person name="Noche R.R."/>
            <person name="Sunker A."/>
            <person name="Alshammari M.J."/>
            <person name="Al-Sheddi T."/>
            <person name="Adly N."/>
            <person name="Al-Dosari M.S."/>
            <person name="Megason S.G."/>
            <person name="Al-Husain M."/>
            <person name="Al-Mohanna F."/>
            <person name="Alkuraya F.S."/>
        </authorList>
    </citation>
    <scope>TISSUE SPECIFICITY</scope>
</reference>
<feature type="chain" id="PRO_0000231523" description="POC1 centriolar protein homolog A">
    <location>
        <begin position="1"/>
        <end position="405"/>
    </location>
</feature>
<feature type="repeat" description="WD 1">
    <location>
        <begin position="17"/>
        <end position="56"/>
    </location>
</feature>
<feature type="repeat" description="WD 2">
    <location>
        <begin position="59"/>
        <end position="98"/>
    </location>
</feature>
<feature type="repeat" description="WD 3">
    <location>
        <begin position="101"/>
        <end position="140"/>
    </location>
</feature>
<feature type="repeat" description="WD 4">
    <location>
        <begin position="143"/>
        <end position="182"/>
    </location>
</feature>
<feature type="repeat" description="WD 5">
    <location>
        <begin position="185"/>
        <end position="224"/>
    </location>
</feature>
<feature type="repeat" description="WD 6">
    <location>
        <begin position="227"/>
        <end position="266"/>
    </location>
</feature>
<feature type="repeat" description="WD 7">
    <location>
        <begin position="269"/>
        <end position="308"/>
    </location>
</feature>
<feature type="region of interest" description="Disordered" evidence="3">
    <location>
        <begin position="313"/>
        <end position="352"/>
    </location>
</feature>
<feature type="coiled-coil region" evidence="2">
    <location>
        <begin position="367"/>
        <end position="395"/>
    </location>
</feature>
<feature type="compositionally biased region" description="Polar residues" evidence="3">
    <location>
        <begin position="341"/>
        <end position="352"/>
    </location>
</feature>
<feature type="splice variant" id="VSP_017840" description="In isoform 3." evidence="5">
    <location>
        <position position="7"/>
    </location>
</feature>
<feature type="splice variant" id="VSP_017841" description="In isoform 2 and isoform 3." evidence="5">
    <location>
        <begin position="326"/>
        <end position="373"/>
    </location>
</feature>
<feature type="sequence conflict" description="In Ref. 1; BAB27371." evidence="6" ref="1">
    <original>C</original>
    <variation>R</variation>
    <location>
        <position position="24"/>
    </location>
</feature>
<feature type="sequence conflict" description="In Ref. 1; BAE32416 and 2; AAH34901." evidence="6" ref="1 2">
    <original>P</original>
    <variation>S</variation>
    <location>
        <position position="50"/>
    </location>
</feature>
<feature type="sequence conflict" description="In Ref. 1; BAB27371." evidence="6" ref="1">
    <original>K</original>
    <variation>N</variation>
    <location>
        <position position="61"/>
    </location>
</feature>
<keyword id="KW-0025">Alternative splicing</keyword>
<keyword id="KW-0966">Cell projection</keyword>
<keyword id="KW-0970">Cilium biogenesis/degradation</keyword>
<keyword id="KW-0175">Coiled coil</keyword>
<keyword id="KW-0963">Cytoplasm</keyword>
<keyword id="KW-0206">Cytoskeleton</keyword>
<keyword id="KW-1185">Reference proteome</keyword>
<keyword id="KW-0677">Repeat</keyword>
<keyword id="KW-0853">WD repeat</keyword>
<evidence type="ECO:0000250" key="1"/>
<evidence type="ECO:0000255" key="2"/>
<evidence type="ECO:0000256" key="3">
    <source>
        <dbReference type="SAM" id="MobiDB-lite"/>
    </source>
</evidence>
<evidence type="ECO:0000269" key="4">
    <source>
    </source>
</evidence>
<evidence type="ECO:0000303" key="5">
    <source>
    </source>
</evidence>
<evidence type="ECO:0000305" key="6"/>
<protein>
    <recommendedName>
        <fullName>POC1 centriolar protein homolog A</fullName>
    </recommendedName>
    <alternativeName>
        <fullName>WD repeat-containing protein 51A</fullName>
    </alternativeName>
</protein>
<gene>
    <name type="primary">Poc1a</name>
    <name type="synonym">Wdr51a</name>
</gene>
<organism>
    <name type="scientific">Mus musculus</name>
    <name type="common">Mouse</name>
    <dbReference type="NCBI Taxonomy" id="10090"/>
    <lineage>
        <taxon>Eukaryota</taxon>
        <taxon>Metazoa</taxon>
        <taxon>Chordata</taxon>
        <taxon>Craniata</taxon>
        <taxon>Vertebrata</taxon>
        <taxon>Euteleostomi</taxon>
        <taxon>Mammalia</taxon>
        <taxon>Eutheria</taxon>
        <taxon>Euarchontoglires</taxon>
        <taxon>Glires</taxon>
        <taxon>Rodentia</taxon>
        <taxon>Myomorpha</taxon>
        <taxon>Muroidea</taxon>
        <taxon>Muridae</taxon>
        <taxon>Murinae</taxon>
        <taxon>Mus</taxon>
        <taxon>Mus</taxon>
    </lineage>
</organism>
<proteinExistence type="evidence at transcript level"/>
<accession>Q8JZX3</accession>
<accession>Q9CY09</accession>
<dbReference type="EMBL" id="AK154163">
    <property type="protein sequence ID" value="BAE32416.1"/>
    <property type="molecule type" value="mRNA"/>
</dbReference>
<dbReference type="EMBL" id="AK011064">
    <property type="protein sequence ID" value="BAB27371.1"/>
    <property type="molecule type" value="mRNA"/>
</dbReference>
<dbReference type="EMBL" id="BC034901">
    <property type="protein sequence ID" value="AAH34901.1"/>
    <property type="molecule type" value="mRNA"/>
</dbReference>
<dbReference type="CCDS" id="CCDS23474.1">
    <molecule id="Q8JZX3-1"/>
</dbReference>
<dbReference type="RefSeq" id="NP_081630.2">
    <molecule id="Q8JZX3-1"/>
    <property type="nucleotide sequence ID" value="NM_027354.2"/>
</dbReference>
<dbReference type="RefSeq" id="XP_036011170.1">
    <molecule id="Q8JZX3-2"/>
    <property type="nucleotide sequence ID" value="XM_036155277.1"/>
</dbReference>
<dbReference type="SMR" id="Q8JZX3"/>
<dbReference type="BioGRID" id="213931">
    <property type="interactions" value="6"/>
</dbReference>
<dbReference type="FunCoup" id="Q8JZX3">
    <property type="interactions" value="417"/>
</dbReference>
<dbReference type="IntAct" id="Q8JZX3">
    <property type="interactions" value="6"/>
</dbReference>
<dbReference type="STRING" id="10090.ENSMUSP00000072064"/>
<dbReference type="PhosphoSitePlus" id="Q8JZX3"/>
<dbReference type="PaxDb" id="10090-ENSMUSP00000072064"/>
<dbReference type="PeptideAtlas" id="Q8JZX3"/>
<dbReference type="ProteomicsDB" id="289863">
    <molecule id="Q8JZX3-1"/>
</dbReference>
<dbReference type="ProteomicsDB" id="289864">
    <molecule id="Q8JZX3-2"/>
</dbReference>
<dbReference type="ProteomicsDB" id="289865">
    <molecule id="Q8JZX3-3"/>
</dbReference>
<dbReference type="Antibodypedia" id="31157">
    <property type="antibodies" value="122 antibodies from 20 providers"/>
</dbReference>
<dbReference type="DNASU" id="70235"/>
<dbReference type="Ensembl" id="ENSMUST00000072206.14">
    <molecule id="Q8JZX3-1"/>
    <property type="protein sequence ID" value="ENSMUSP00000072064.7"/>
    <property type="gene ID" value="ENSMUSG00000023345.18"/>
</dbReference>
<dbReference type="Ensembl" id="ENSMUST00000191434.2">
    <molecule id="Q8JZX3-3"/>
    <property type="protein sequence ID" value="ENSMUSP00000140374.2"/>
    <property type="gene ID" value="ENSMUSG00000023345.18"/>
</dbReference>
<dbReference type="GeneID" id="70235"/>
<dbReference type="KEGG" id="mmu:70235"/>
<dbReference type="UCSC" id="uc009rjk.2">
    <molecule id="Q8JZX3-1"/>
    <property type="organism name" value="mouse"/>
</dbReference>
<dbReference type="UCSC" id="uc009rjl.2">
    <molecule id="Q8JZX3-3"/>
    <property type="organism name" value="mouse"/>
</dbReference>
<dbReference type="AGR" id="MGI:1917485"/>
<dbReference type="CTD" id="25886"/>
<dbReference type="MGI" id="MGI:1917485">
    <property type="gene designation" value="Poc1a"/>
</dbReference>
<dbReference type="VEuPathDB" id="HostDB:ENSMUSG00000023345"/>
<dbReference type="eggNOG" id="ENOG502QSVJ">
    <property type="taxonomic scope" value="Eukaryota"/>
</dbReference>
<dbReference type="GeneTree" id="ENSGT00940000157494"/>
<dbReference type="HOGENOM" id="CLU_000288_57_17_1"/>
<dbReference type="InParanoid" id="Q8JZX3"/>
<dbReference type="OMA" id="LMIWHFK"/>
<dbReference type="OrthoDB" id="8998at9989"/>
<dbReference type="PhylomeDB" id="Q8JZX3"/>
<dbReference type="TreeFam" id="TF324210"/>
<dbReference type="BioGRID-ORCS" id="70235">
    <property type="hits" value="7 hits in 79 CRISPR screens"/>
</dbReference>
<dbReference type="ChiTaRS" id="Poc1a">
    <property type="organism name" value="mouse"/>
</dbReference>
<dbReference type="PRO" id="PR:Q8JZX3"/>
<dbReference type="Proteomes" id="UP000000589">
    <property type="component" value="Chromosome 9"/>
</dbReference>
<dbReference type="RNAct" id="Q8JZX3">
    <property type="molecule type" value="protein"/>
</dbReference>
<dbReference type="Bgee" id="ENSMUSG00000023345">
    <property type="expression patterns" value="Expressed in animal zygote and 136 other cell types or tissues"/>
</dbReference>
<dbReference type="ExpressionAtlas" id="Q8JZX3">
    <property type="expression patterns" value="baseline and differential"/>
</dbReference>
<dbReference type="GO" id="GO:0005814">
    <property type="term" value="C:centriole"/>
    <property type="evidence" value="ECO:0000250"/>
    <property type="project" value="UniProtKB"/>
</dbReference>
<dbReference type="GO" id="GO:0005813">
    <property type="term" value="C:centrosome"/>
    <property type="evidence" value="ECO:0000314"/>
    <property type="project" value="MGI"/>
</dbReference>
<dbReference type="GO" id="GO:0036064">
    <property type="term" value="C:ciliary basal body"/>
    <property type="evidence" value="ECO:0000250"/>
    <property type="project" value="UniProtKB"/>
</dbReference>
<dbReference type="GO" id="GO:0005737">
    <property type="term" value="C:cytoplasm"/>
    <property type="evidence" value="ECO:0000314"/>
    <property type="project" value="MGI"/>
</dbReference>
<dbReference type="GO" id="GO:0000922">
    <property type="term" value="C:spindle pole"/>
    <property type="evidence" value="ECO:0000250"/>
    <property type="project" value="UniProtKB"/>
</dbReference>
<dbReference type="GO" id="GO:0060348">
    <property type="term" value="P:bone development"/>
    <property type="evidence" value="ECO:0000315"/>
    <property type="project" value="MGI"/>
</dbReference>
<dbReference type="GO" id="GO:0003431">
    <property type="term" value="P:growth plate cartilage chondrocyte development"/>
    <property type="evidence" value="ECO:0000315"/>
    <property type="project" value="MGI"/>
</dbReference>
<dbReference type="GO" id="GO:0007052">
    <property type="term" value="P:mitotic spindle organization"/>
    <property type="evidence" value="ECO:0000315"/>
    <property type="project" value="MGI"/>
</dbReference>
<dbReference type="GO" id="GO:1905515">
    <property type="term" value="P:non-motile cilium assembly"/>
    <property type="evidence" value="ECO:0000315"/>
    <property type="project" value="MGI"/>
</dbReference>
<dbReference type="GO" id="GO:0010825">
    <property type="term" value="P:positive regulation of centrosome duplication"/>
    <property type="evidence" value="ECO:0000315"/>
    <property type="project" value="MGI"/>
</dbReference>
<dbReference type="GO" id="GO:0007283">
    <property type="term" value="P:spermatogenesis"/>
    <property type="evidence" value="ECO:0000315"/>
    <property type="project" value="MGI"/>
</dbReference>
<dbReference type="CDD" id="cd00200">
    <property type="entry name" value="WD40"/>
    <property type="match status" value="1"/>
</dbReference>
<dbReference type="FunFam" id="2.130.10.10:FF:000527">
    <property type="entry name" value="POC1 centriolar protein homolog A"/>
    <property type="match status" value="1"/>
</dbReference>
<dbReference type="FunFam" id="2.130.10.10:FF:000699">
    <property type="entry name" value="POC1 centriolar protein homolog A"/>
    <property type="match status" value="1"/>
</dbReference>
<dbReference type="FunFam" id="2.130.10.10:FF:000877">
    <property type="entry name" value="POC1 centriolar protein homolog A"/>
    <property type="match status" value="1"/>
</dbReference>
<dbReference type="Gene3D" id="2.130.10.10">
    <property type="entry name" value="YVTN repeat-like/Quinoprotein amine dehydrogenase"/>
    <property type="match status" value="3"/>
</dbReference>
<dbReference type="InterPro" id="IPR020472">
    <property type="entry name" value="G-protein_beta_WD-40_rep"/>
</dbReference>
<dbReference type="InterPro" id="IPR015943">
    <property type="entry name" value="WD40/YVTN_repeat-like_dom_sf"/>
</dbReference>
<dbReference type="InterPro" id="IPR019775">
    <property type="entry name" value="WD40_repeat_CS"/>
</dbReference>
<dbReference type="InterPro" id="IPR036322">
    <property type="entry name" value="WD40_repeat_dom_sf"/>
</dbReference>
<dbReference type="InterPro" id="IPR001680">
    <property type="entry name" value="WD40_rpt"/>
</dbReference>
<dbReference type="InterPro" id="IPR050505">
    <property type="entry name" value="WDR55_POC1"/>
</dbReference>
<dbReference type="PANTHER" id="PTHR44019:SF2">
    <property type="entry name" value="POC1 CENTRIOLAR PROTEIN HOMOLOG A"/>
    <property type="match status" value="1"/>
</dbReference>
<dbReference type="PANTHER" id="PTHR44019">
    <property type="entry name" value="WD REPEAT-CONTAINING PROTEIN 55"/>
    <property type="match status" value="1"/>
</dbReference>
<dbReference type="Pfam" id="PF00400">
    <property type="entry name" value="WD40"/>
    <property type="match status" value="7"/>
</dbReference>
<dbReference type="PRINTS" id="PR00320">
    <property type="entry name" value="GPROTEINBRPT"/>
</dbReference>
<dbReference type="SMART" id="SM00320">
    <property type="entry name" value="WD40"/>
    <property type="match status" value="7"/>
</dbReference>
<dbReference type="SUPFAM" id="SSF50978">
    <property type="entry name" value="WD40 repeat-like"/>
    <property type="match status" value="1"/>
</dbReference>
<dbReference type="PROSITE" id="PS00678">
    <property type="entry name" value="WD_REPEATS_1"/>
    <property type="match status" value="1"/>
</dbReference>
<dbReference type="PROSITE" id="PS50082">
    <property type="entry name" value="WD_REPEATS_2"/>
    <property type="match status" value="7"/>
</dbReference>
<dbReference type="PROSITE" id="PS50294">
    <property type="entry name" value="WD_REPEATS_REGION"/>
    <property type="match status" value="1"/>
</dbReference>